<feature type="chain" id="PRO_0000326286" description="Matrix protein 1">
    <location>
        <begin position="1"/>
        <end position="252"/>
    </location>
</feature>
<feature type="region of interest" description="Membrane-binding" evidence="1">
    <location>
        <begin position="1"/>
        <end position="164"/>
    </location>
</feature>
<feature type="region of interest" description="RNP-binding" evidence="1">
    <location>
        <begin position="165"/>
        <end position="252"/>
    </location>
</feature>
<feature type="short sequence motif" description="Nuclear localization signal" evidence="1">
    <location>
        <begin position="101"/>
        <end position="105"/>
    </location>
</feature>
<evidence type="ECO:0000255" key="1">
    <source>
        <dbReference type="HAMAP-Rule" id="MF_04068"/>
    </source>
</evidence>
<comment type="function">
    <text evidence="1">Plays critical roles in virus replication, from virus entry and uncoating to assembly and budding of the virus particle. M1 binding to ribonucleocapsids (RNPs) in nucleus seems to inhibit viral transcription. Interaction of viral NEP with M1-RNP is thought to promote nuclear export of the complex, which is targeted to the virion assembly site at the apical plasma membrane in polarized epithelial cells. Interactions with NA and HA may bring M1, a non-raft-associated protein, into lipid rafts. Forms a continuous shell on the inner side of the lipid bilayer in virion, where it binds the RNP. During virus entry into cell, the M2 ion channel acidifies the internal virion core, inducing M1 dissociation from the RNP. M1-free RNPs are transported to the nucleus, where viral transcription and replication can take place.</text>
</comment>
<comment type="function">
    <text evidence="1">Determines the virion's shape: spherical or filamentous. Clinical isolates of influenza are characterized by the presence of significant proportion of filamentous virions, whereas after multiple passage on eggs or cell culture, virions have only spherical morphology. Filamentous virions are thought to be important to infect neighboring cells, and spherical virions more suited to spread through aerosol between hosts organisms.</text>
</comment>
<comment type="subunit">
    <text evidence="1">Homodimer and homomultimer. Interacts with NEP. Binds ribonucleocapsid by both interacting with genomic RNA and NP protein. May interact with HA and NA. Cannot bind NP without genomic RNA.</text>
</comment>
<comment type="subcellular location">
    <subcellularLocation>
        <location evidence="1">Virion membrane</location>
        <topology evidence="1">Peripheral membrane protein</topology>
        <orientation evidence="1">Cytoplasmic side</orientation>
    </subcellularLocation>
    <subcellularLocation>
        <location evidence="1">Host nucleus</location>
    </subcellularLocation>
</comment>
<comment type="alternative products">
    <event type="alternative splicing"/>
    <isoform>
        <id>Q6XTU9-1</id>
        <name>M1</name>
        <sequence type="displayed"/>
    </isoform>
    <isoform>
        <id>Q6XTV0-1</id>
        <name>M2</name>
        <sequence type="external"/>
    </isoform>
    <text>Only the first 9 residues are shared by the 2 isoforms.</text>
</comment>
<comment type="miscellaneous">
    <text evidence="1">Most abundant protein in virion. When expressed alone can form virus-like particles in transfected cells.</text>
</comment>
<comment type="similarity">
    <text evidence="1">Belongs to the influenza viruses Matrix protein M1 family.</text>
</comment>
<organism>
    <name type="scientific">Influenza A virus (strain A/Tokyo/3/1967 H2N2)</name>
    <dbReference type="NCBI Taxonomy" id="380960"/>
    <lineage>
        <taxon>Viruses</taxon>
        <taxon>Riboviria</taxon>
        <taxon>Orthornavirae</taxon>
        <taxon>Negarnaviricota</taxon>
        <taxon>Polyploviricotina</taxon>
        <taxon>Insthoviricetes</taxon>
        <taxon>Articulavirales</taxon>
        <taxon>Orthomyxoviridae</taxon>
        <taxon>Alphainfluenzavirus</taxon>
        <taxon>Alphainfluenzavirus influenzae</taxon>
        <taxon>Influenza A virus</taxon>
    </lineage>
</organism>
<organismHost>
    <name type="scientific">Aves</name>
    <dbReference type="NCBI Taxonomy" id="8782"/>
</organismHost>
<organismHost>
    <name type="scientific">Homo sapiens</name>
    <name type="common">Human</name>
    <dbReference type="NCBI Taxonomy" id="9606"/>
</organismHost>
<reference key="1">
    <citation type="journal article" date="2004" name="Virology">
        <title>Genetic analysis of human H2N2 and early H3N2 influenza viruses, 1957-1972: evidence for genetic divergence and multiple reassortment events.</title>
        <authorList>
            <person name="Lindstrom S.E."/>
            <person name="Cox N.J."/>
            <person name="Klimov A."/>
        </authorList>
    </citation>
    <scope>NUCLEOTIDE SEQUENCE [GENOMIC RNA]</scope>
</reference>
<dbReference type="EMBL" id="AY210059">
    <property type="protein sequence ID" value="AAO46408.1"/>
    <property type="molecule type" value="Genomic_RNA"/>
</dbReference>
<dbReference type="SMR" id="Q6XTU9"/>
<dbReference type="GO" id="GO:0042025">
    <property type="term" value="C:host cell nucleus"/>
    <property type="evidence" value="ECO:0007669"/>
    <property type="project" value="UniProtKB-SubCell"/>
</dbReference>
<dbReference type="GO" id="GO:0016020">
    <property type="term" value="C:membrane"/>
    <property type="evidence" value="ECO:0007669"/>
    <property type="project" value="UniProtKB-KW"/>
</dbReference>
<dbReference type="GO" id="GO:0055036">
    <property type="term" value="C:virion membrane"/>
    <property type="evidence" value="ECO:0007669"/>
    <property type="project" value="UniProtKB-SubCell"/>
</dbReference>
<dbReference type="GO" id="GO:0003723">
    <property type="term" value="F:RNA binding"/>
    <property type="evidence" value="ECO:0007669"/>
    <property type="project" value="UniProtKB-UniRule"/>
</dbReference>
<dbReference type="GO" id="GO:0039660">
    <property type="term" value="F:structural constituent of virion"/>
    <property type="evidence" value="ECO:0007669"/>
    <property type="project" value="UniProtKB-UniRule"/>
</dbReference>
<dbReference type="GO" id="GO:0046761">
    <property type="term" value="P:viral budding from plasma membrane"/>
    <property type="evidence" value="ECO:0007669"/>
    <property type="project" value="UniProtKB-UniRule"/>
</dbReference>
<dbReference type="FunFam" id="1.10.10.180:FF:000001">
    <property type="entry name" value="Matrix protein 1"/>
    <property type="match status" value="1"/>
</dbReference>
<dbReference type="FunFam" id="1.20.91.10:FF:000001">
    <property type="entry name" value="Matrix protein 1"/>
    <property type="match status" value="1"/>
</dbReference>
<dbReference type="Gene3D" id="1.10.10.180">
    <property type="match status" value="1"/>
</dbReference>
<dbReference type="Gene3D" id="1.20.91.10">
    <property type="match status" value="1"/>
</dbReference>
<dbReference type="HAMAP" id="MF_04068">
    <property type="entry name" value="INFV_M1"/>
    <property type="match status" value="1"/>
</dbReference>
<dbReference type="InterPro" id="IPR036039">
    <property type="entry name" value="Flu_matrix_M1"/>
</dbReference>
<dbReference type="InterPro" id="IPR013188">
    <property type="entry name" value="Flu_matrix_M1_C"/>
</dbReference>
<dbReference type="InterPro" id="IPR001561">
    <property type="entry name" value="Flu_matrix_M1_N"/>
</dbReference>
<dbReference type="InterPro" id="IPR015423">
    <property type="entry name" value="Flu_matrix_M1_N_sub1"/>
</dbReference>
<dbReference type="InterPro" id="IPR015799">
    <property type="entry name" value="Flu_matrix_M1_N_sub2"/>
</dbReference>
<dbReference type="InterPro" id="IPR037533">
    <property type="entry name" value="INFV_M1"/>
</dbReference>
<dbReference type="Pfam" id="PF00598">
    <property type="entry name" value="Flu_M1"/>
    <property type="match status" value="1"/>
</dbReference>
<dbReference type="Pfam" id="PF08289">
    <property type="entry name" value="Flu_M1_C"/>
    <property type="match status" value="1"/>
</dbReference>
<dbReference type="SMART" id="SM00759">
    <property type="entry name" value="Flu_M1_C"/>
    <property type="match status" value="1"/>
</dbReference>
<dbReference type="SUPFAM" id="SSF48145">
    <property type="entry name" value="Influenza virus matrix protein M1"/>
    <property type="match status" value="1"/>
</dbReference>
<sequence length="252" mass="27894">MSLLTEVETYVLSIVPSGPLKAEIAQRLEDVFAGKNTDLEALMEWLKTRPILSPLTKGILGFVFTLTVPSERGLQRRRFVQNALNGNGDPNNMDRAVKLYRKLKREITFHGAKEIALSYSAGALASCMGLIYNRMGTVTTEVAFGLVCATCEQIADSQHRSHRQMVTTTNPLIRHENRMVLASTTAKAMEQMAGSSEQAAEAMEVASQARQMVQAMRAIGTHPSSSTGLKDDLLENLQAYQKRMGVQMQRFK</sequence>
<protein>
    <recommendedName>
        <fullName evidence="1">Matrix protein 1</fullName>
        <shortName evidence="1">M1</shortName>
    </recommendedName>
</protein>
<gene>
    <name evidence="1" type="primary">M</name>
</gene>
<name>M1_I67A0</name>
<proteinExistence type="inferred from homology"/>
<keyword id="KW-0025">Alternative splicing</keyword>
<keyword id="KW-1048">Host nucleus</keyword>
<keyword id="KW-0472">Membrane</keyword>
<keyword id="KW-0694">RNA-binding</keyword>
<keyword id="KW-0468">Viral matrix protein</keyword>
<keyword id="KW-0946">Virion</keyword>
<accession>Q6XTU9</accession>